<name>LPXC_SHEB5</name>
<gene>
    <name evidence="1" type="primary">lpxC</name>
    <name type="ordered locus">Sbal_0407</name>
</gene>
<sequence length="306" mass="33605">MIFQRTVQKMVKTTGVGLHSGNKVTLSIMPAPVNSGIVLVRTDLSPAVAIPAKAEQVRETTMCTALVNDEGIRISTIEHLFAALAGLGIDNAVIEVDAPEIPIMDGSASPFVFLLQSAGIKEQAAPKKYLKIKRPVRVEDGDKWAELKPFKGFRVNFKIDFAHPEIARSQQHVVMDFSTSAFVKDISRARTFGFMRDIEYLRANNLALGGSMENAVVLDEYRVLNPDGLRYEDEFVKHKILDAFGDLYVAGHAILGEFTAYKTGHALNNQLVRALLAQQDAWELVSFEKEADVPVSFTVPGGAVFA</sequence>
<organism>
    <name type="scientific">Shewanella baltica (strain OS155 / ATCC BAA-1091)</name>
    <dbReference type="NCBI Taxonomy" id="325240"/>
    <lineage>
        <taxon>Bacteria</taxon>
        <taxon>Pseudomonadati</taxon>
        <taxon>Pseudomonadota</taxon>
        <taxon>Gammaproteobacteria</taxon>
        <taxon>Alteromonadales</taxon>
        <taxon>Shewanellaceae</taxon>
        <taxon>Shewanella</taxon>
    </lineage>
</organism>
<evidence type="ECO:0000255" key="1">
    <source>
        <dbReference type="HAMAP-Rule" id="MF_00388"/>
    </source>
</evidence>
<comment type="function">
    <text evidence="1">Catalyzes the hydrolysis of UDP-3-O-myristoyl-N-acetylglucosamine to form UDP-3-O-myristoylglucosamine and acetate, the committed step in lipid A biosynthesis.</text>
</comment>
<comment type="catalytic activity">
    <reaction evidence="1">
        <text>a UDP-3-O-[(3R)-3-hydroxyacyl]-N-acetyl-alpha-D-glucosamine + H2O = a UDP-3-O-[(3R)-3-hydroxyacyl]-alpha-D-glucosamine + acetate</text>
        <dbReference type="Rhea" id="RHEA:67816"/>
        <dbReference type="ChEBI" id="CHEBI:15377"/>
        <dbReference type="ChEBI" id="CHEBI:30089"/>
        <dbReference type="ChEBI" id="CHEBI:137740"/>
        <dbReference type="ChEBI" id="CHEBI:173225"/>
        <dbReference type="EC" id="3.5.1.108"/>
    </reaction>
</comment>
<comment type="cofactor">
    <cofactor evidence="1">
        <name>Zn(2+)</name>
        <dbReference type="ChEBI" id="CHEBI:29105"/>
    </cofactor>
</comment>
<comment type="pathway">
    <text evidence="1">Glycolipid biosynthesis; lipid IV(A) biosynthesis; lipid IV(A) from (3R)-3-hydroxytetradecanoyl-[acyl-carrier-protein] and UDP-N-acetyl-alpha-D-glucosamine: step 2/6.</text>
</comment>
<comment type="similarity">
    <text evidence="1">Belongs to the LpxC family.</text>
</comment>
<dbReference type="EC" id="3.5.1.108" evidence="1"/>
<dbReference type="EMBL" id="CP000563">
    <property type="protein sequence ID" value="ABN59939.1"/>
    <property type="molecule type" value="Genomic_DNA"/>
</dbReference>
<dbReference type="RefSeq" id="WP_011845621.1">
    <property type="nucleotide sequence ID" value="NC_009052.1"/>
</dbReference>
<dbReference type="SMR" id="A3CZM6"/>
<dbReference type="STRING" id="325240.Sbal_0407"/>
<dbReference type="GeneID" id="11774539"/>
<dbReference type="KEGG" id="sbl:Sbal_0407"/>
<dbReference type="HOGENOM" id="CLU_046528_1_0_6"/>
<dbReference type="OrthoDB" id="9802746at2"/>
<dbReference type="UniPathway" id="UPA00359">
    <property type="reaction ID" value="UER00478"/>
</dbReference>
<dbReference type="Proteomes" id="UP000001557">
    <property type="component" value="Chromosome"/>
</dbReference>
<dbReference type="GO" id="GO:0016020">
    <property type="term" value="C:membrane"/>
    <property type="evidence" value="ECO:0007669"/>
    <property type="project" value="GOC"/>
</dbReference>
<dbReference type="GO" id="GO:0046872">
    <property type="term" value="F:metal ion binding"/>
    <property type="evidence" value="ECO:0007669"/>
    <property type="project" value="UniProtKB-KW"/>
</dbReference>
<dbReference type="GO" id="GO:0103117">
    <property type="term" value="F:UDP-3-O-acyl-N-acetylglucosamine deacetylase activity"/>
    <property type="evidence" value="ECO:0007669"/>
    <property type="project" value="UniProtKB-UniRule"/>
</dbReference>
<dbReference type="GO" id="GO:0009245">
    <property type="term" value="P:lipid A biosynthetic process"/>
    <property type="evidence" value="ECO:0007669"/>
    <property type="project" value="UniProtKB-UniRule"/>
</dbReference>
<dbReference type="Gene3D" id="3.30.230.20">
    <property type="entry name" value="lpxc deacetylase, domain 1"/>
    <property type="match status" value="1"/>
</dbReference>
<dbReference type="Gene3D" id="3.30.1700.10">
    <property type="entry name" value="lpxc deacetylase, domain 2"/>
    <property type="match status" value="1"/>
</dbReference>
<dbReference type="HAMAP" id="MF_00388">
    <property type="entry name" value="LpxC"/>
    <property type="match status" value="1"/>
</dbReference>
<dbReference type="InterPro" id="IPR020568">
    <property type="entry name" value="Ribosomal_Su5_D2-typ_SF"/>
</dbReference>
<dbReference type="InterPro" id="IPR004463">
    <property type="entry name" value="UDP-acyl_GlcNac_deAcase"/>
</dbReference>
<dbReference type="InterPro" id="IPR011334">
    <property type="entry name" value="UDP-acyl_GlcNac_deAcase_C"/>
</dbReference>
<dbReference type="InterPro" id="IPR015870">
    <property type="entry name" value="UDP-acyl_N-AcGlcN_deAcase_N"/>
</dbReference>
<dbReference type="NCBIfam" id="TIGR00325">
    <property type="entry name" value="lpxC"/>
    <property type="match status" value="1"/>
</dbReference>
<dbReference type="PANTHER" id="PTHR33694">
    <property type="entry name" value="UDP-3-O-ACYL-N-ACETYLGLUCOSAMINE DEACETYLASE 1, MITOCHONDRIAL-RELATED"/>
    <property type="match status" value="1"/>
</dbReference>
<dbReference type="PANTHER" id="PTHR33694:SF1">
    <property type="entry name" value="UDP-3-O-ACYL-N-ACETYLGLUCOSAMINE DEACETYLASE 1, MITOCHONDRIAL-RELATED"/>
    <property type="match status" value="1"/>
</dbReference>
<dbReference type="Pfam" id="PF03331">
    <property type="entry name" value="LpxC"/>
    <property type="match status" value="1"/>
</dbReference>
<dbReference type="SUPFAM" id="SSF54211">
    <property type="entry name" value="Ribosomal protein S5 domain 2-like"/>
    <property type="match status" value="2"/>
</dbReference>
<keyword id="KW-0378">Hydrolase</keyword>
<keyword id="KW-0441">Lipid A biosynthesis</keyword>
<keyword id="KW-0444">Lipid biosynthesis</keyword>
<keyword id="KW-0443">Lipid metabolism</keyword>
<keyword id="KW-0479">Metal-binding</keyword>
<keyword id="KW-1185">Reference proteome</keyword>
<keyword id="KW-0862">Zinc</keyword>
<reference key="1">
    <citation type="submission" date="2007-02" db="EMBL/GenBank/DDBJ databases">
        <title>Complete sequence of chromosome of Shewanella baltica OS155.</title>
        <authorList>
            <consortium name="US DOE Joint Genome Institute"/>
            <person name="Copeland A."/>
            <person name="Lucas S."/>
            <person name="Lapidus A."/>
            <person name="Barry K."/>
            <person name="Detter J.C."/>
            <person name="Glavina del Rio T."/>
            <person name="Hammon N."/>
            <person name="Israni S."/>
            <person name="Dalin E."/>
            <person name="Tice H."/>
            <person name="Pitluck S."/>
            <person name="Sims D.R."/>
            <person name="Brettin T."/>
            <person name="Bruce D."/>
            <person name="Han C."/>
            <person name="Tapia R."/>
            <person name="Brainard J."/>
            <person name="Schmutz J."/>
            <person name="Larimer F."/>
            <person name="Land M."/>
            <person name="Hauser L."/>
            <person name="Kyrpides N."/>
            <person name="Mikhailova N."/>
            <person name="Brettar I."/>
            <person name="Klappenbach J."/>
            <person name="Konstantinidis K."/>
            <person name="Rodrigues J."/>
            <person name="Tiedje J."/>
            <person name="Richardson P."/>
        </authorList>
    </citation>
    <scope>NUCLEOTIDE SEQUENCE [LARGE SCALE GENOMIC DNA]</scope>
    <source>
        <strain>OS155 / ATCC BAA-1091</strain>
    </source>
</reference>
<proteinExistence type="inferred from homology"/>
<accession>A3CZM6</accession>
<feature type="chain" id="PRO_1000013226" description="UDP-3-O-acyl-N-acetylglucosamine deacetylase">
    <location>
        <begin position="1"/>
        <end position="306"/>
    </location>
</feature>
<feature type="active site" description="Proton donor" evidence="1">
    <location>
        <position position="265"/>
    </location>
</feature>
<feature type="binding site" evidence="1">
    <location>
        <position position="79"/>
    </location>
    <ligand>
        <name>Zn(2+)</name>
        <dbReference type="ChEBI" id="CHEBI:29105"/>
    </ligand>
</feature>
<feature type="binding site" evidence="1">
    <location>
        <position position="238"/>
    </location>
    <ligand>
        <name>Zn(2+)</name>
        <dbReference type="ChEBI" id="CHEBI:29105"/>
    </ligand>
</feature>
<feature type="binding site" evidence="1">
    <location>
        <position position="242"/>
    </location>
    <ligand>
        <name>Zn(2+)</name>
        <dbReference type="ChEBI" id="CHEBI:29105"/>
    </ligand>
</feature>
<protein>
    <recommendedName>
        <fullName evidence="1">UDP-3-O-acyl-N-acetylglucosamine deacetylase</fullName>
        <shortName evidence="1">UDP-3-O-acyl-GlcNAc deacetylase</shortName>
        <ecNumber evidence="1">3.5.1.108</ecNumber>
    </recommendedName>
    <alternativeName>
        <fullName evidence="1">UDP-3-O-[R-3-hydroxymyristoyl]-N-acetylglucosamine deacetylase</fullName>
    </alternativeName>
</protein>